<name>MDTA_SALTI</name>
<sequence length="413" mass="44128">MKGSNTFRWAIAIGVVVAAAAFWFWHSRSESPTAAPGVAAQAQHTAAAGRRGMRDGPLAPVQAATATTQAVPRYLSGLGTVTAANTVTVRSRVDGQLIALHFQEGQQVNAGDLLAQIDPSQFKVALAQAQGQLAKDNATLANARRDLARYQQLAKTNLVSRQELDAQQALVNETQGTIKADEANVASAQLQLDWSRITAPVSGRVGLKQVDVGNQISSSDTAGIVVITQTHPIDLIFTLPESDIATVVQAQKAGKTLVVEAWDRTNSHKLSEGVLLSLDNQIDPTTGTIKIKARFTNQDDTLFPNQFVNARMLVDTEQNAVVVPAAAVQMGNEGHFVWVLNDENNVSKKRVKIGIQDNRNVVISAGLSAGDRVVTDGIDRLTEGAKVEVVEPQTTMADEKSPSRHEGQKGARA</sequence>
<feature type="signal peptide" evidence="1">
    <location>
        <begin position="1"/>
        <end position="20"/>
    </location>
</feature>
<feature type="chain" id="PRO_0000018704" description="Multidrug resistance protein MdtA">
    <location>
        <begin position="21"/>
        <end position="413"/>
    </location>
</feature>
<feature type="region of interest" description="Disordered" evidence="2">
    <location>
        <begin position="31"/>
        <end position="57"/>
    </location>
</feature>
<feature type="region of interest" description="Disordered" evidence="2">
    <location>
        <begin position="391"/>
        <end position="413"/>
    </location>
</feature>
<feature type="compositionally biased region" description="Low complexity" evidence="2">
    <location>
        <begin position="32"/>
        <end position="49"/>
    </location>
</feature>
<feature type="compositionally biased region" description="Basic and acidic residues" evidence="2">
    <location>
        <begin position="397"/>
        <end position="413"/>
    </location>
</feature>
<protein>
    <recommendedName>
        <fullName evidence="1">Multidrug resistance protein MdtA</fullName>
    </recommendedName>
    <alternativeName>
        <fullName evidence="1">Multidrug transporter MdtA</fullName>
    </alternativeName>
</protein>
<organism>
    <name type="scientific">Salmonella typhi</name>
    <dbReference type="NCBI Taxonomy" id="90370"/>
    <lineage>
        <taxon>Bacteria</taxon>
        <taxon>Pseudomonadati</taxon>
        <taxon>Pseudomonadota</taxon>
        <taxon>Gammaproteobacteria</taxon>
        <taxon>Enterobacterales</taxon>
        <taxon>Enterobacteriaceae</taxon>
        <taxon>Salmonella</taxon>
    </lineage>
</organism>
<evidence type="ECO:0000255" key="1">
    <source>
        <dbReference type="HAMAP-Rule" id="MF_01422"/>
    </source>
</evidence>
<evidence type="ECO:0000256" key="2">
    <source>
        <dbReference type="SAM" id="MobiDB-lite"/>
    </source>
</evidence>
<reference key="1">
    <citation type="journal article" date="2001" name="Nature">
        <title>Complete genome sequence of a multiple drug resistant Salmonella enterica serovar Typhi CT18.</title>
        <authorList>
            <person name="Parkhill J."/>
            <person name="Dougan G."/>
            <person name="James K.D."/>
            <person name="Thomson N.R."/>
            <person name="Pickard D."/>
            <person name="Wain J."/>
            <person name="Churcher C.M."/>
            <person name="Mungall K.L."/>
            <person name="Bentley S.D."/>
            <person name="Holden M.T.G."/>
            <person name="Sebaihia M."/>
            <person name="Baker S."/>
            <person name="Basham D."/>
            <person name="Brooks K."/>
            <person name="Chillingworth T."/>
            <person name="Connerton P."/>
            <person name="Cronin A."/>
            <person name="Davis P."/>
            <person name="Davies R.M."/>
            <person name="Dowd L."/>
            <person name="White N."/>
            <person name="Farrar J."/>
            <person name="Feltwell T."/>
            <person name="Hamlin N."/>
            <person name="Haque A."/>
            <person name="Hien T.T."/>
            <person name="Holroyd S."/>
            <person name="Jagels K."/>
            <person name="Krogh A."/>
            <person name="Larsen T.S."/>
            <person name="Leather S."/>
            <person name="Moule S."/>
            <person name="O'Gaora P."/>
            <person name="Parry C."/>
            <person name="Quail M.A."/>
            <person name="Rutherford K.M."/>
            <person name="Simmonds M."/>
            <person name="Skelton J."/>
            <person name="Stevens K."/>
            <person name="Whitehead S."/>
            <person name="Barrell B.G."/>
        </authorList>
    </citation>
    <scope>NUCLEOTIDE SEQUENCE [LARGE SCALE GENOMIC DNA]</scope>
    <source>
        <strain>CT18</strain>
    </source>
</reference>
<reference key="2">
    <citation type="journal article" date="2003" name="J. Bacteriol.">
        <title>Comparative genomics of Salmonella enterica serovar Typhi strains Ty2 and CT18.</title>
        <authorList>
            <person name="Deng W."/>
            <person name="Liou S.-R."/>
            <person name="Plunkett G. III"/>
            <person name="Mayhew G.F."/>
            <person name="Rose D.J."/>
            <person name="Burland V."/>
            <person name="Kodoyianni V."/>
            <person name="Schwartz D.C."/>
            <person name="Blattner F.R."/>
        </authorList>
    </citation>
    <scope>NUCLEOTIDE SEQUENCE [LARGE SCALE GENOMIC DNA]</scope>
    <source>
        <strain>ATCC 700931 / Ty2</strain>
    </source>
</reference>
<gene>
    <name evidence="1" type="primary">mdtA</name>
    <name type="ordered locus">STY2339</name>
    <name type="ordered locus">t0746</name>
</gene>
<keyword id="KW-0997">Cell inner membrane</keyword>
<keyword id="KW-1003">Cell membrane</keyword>
<keyword id="KW-0472">Membrane</keyword>
<keyword id="KW-0732">Signal</keyword>
<keyword id="KW-0813">Transport</keyword>
<proteinExistence type="inferred from homology"/>
<accession>Q8Z5F8</accession>
<accession>Q7CAY5</accession>
<dbReference type="EMBL" id="AL513382">
    <property type="protein sequence ID" value="CAD02489.1"/>
    <property type="molecule type" value="Genomic_DNA"/>
</dbReference>
<dbReference type="EMBL" id="AE014613">
    <property type="protein sequence ID" value="AAO68439.1"/>
    <property type="molecule type" value="Genomic_DNA"/>
</dbReference>
<dbReference type="RefSeq" id="NP_456672.1">
    <property type="nucleotide sequence ID" value="NC_003198.1"/>
</dbReference>
<dbReference type="RefSeq" id="WP_000678826.1">
    <property type="nucleotide sequence ID" value="NZ_WSUR01000002.1"/>
</dbReference>
<dbReference type="SMR" id="Q8Z5F8"/>
<dbReference type="STRING" id="220341.gene:17586244"/>
<dbReference type="KEGG" id="stt:t0746"/>
<dbReference type="KEGG" id="sty:STY2339"/>
<dbReference type="PATRIC" id="fig|220341.7.peg.2363"/>
<dbReference type="eggNOG" id="COG0845">
    <property type="taxonomic scope" value="Bacteria"/>
</dbReference>
<dbReference type="HOGENOM" id="CLU_018816_2_0_6"/>
<dbReference type="OMA" id="GQLMAIH"/>
<dbReference type="OrthoDB" id="9783047at2"/>
<dbReference type="Proteomes" id="UP000000541">
    <property type="component" value="Chromosome"/>
</dbReference>
<dbReference type="Proteomes" id="UP000002670">
    <property type="component" value="Chromosome"/>
</dbReference>
<dbReference type="GO" id="GO:1990281">
    <property type="term" value="C:efflux pump complex"/>
    <property type="evidence" value="ECO:0007669"/>
    <property type="project" value="TreeGrafter"/>
</dbReference>
<dbReference type="GO" id="GO:0005886">
    <property type="term" value="C:plasma membrane"/>
    <property type="evidence" value="ECO:0007669"/>
    <property type="project" value="UniProtKB-SubCell"/>
</dbReference>
<dbReference type="GO" id="GO:0015562">
    <property type="term" value="F:efflux transmembrane transporter activity"/>
    <property type="evidence" value="ECO:0007669"/>
    <property type="project" value="TreeGrafter"/>
</dbReference>
<dbReference type="FunFam" id="2.40.420.20:FF:000001">
    <property type="entry name" value="Efflux RND transporter periplasmic adaptor subunit"/>
    <property type="match status" value="1"/>
</dbReference>
<dbReference type="FunFam" id="1.10.287.470:FF:000005">
    <property type="entry name" value="Multidrug resistance protein MdtA"/>
    <property type="match status" value="1"/>
</dbReference>
<dbReference type="FunFam" id="2.40.30.170:FF:000006">
    <property type="entry name" value="Multidrug resistance protein MdtA"/>
    <property type="match status" value="1"/>
</dbReference>
<dbReference type="Gene3D" id="2.40.30.170">
    <property type="match status" value="1"/>
</dbReference>
<dbReference type="Gene3D" id="2.40.420.20">
    <property type="match status" value="1"/>
</dbReference>
<dbReference type="Gene3D" id="2.40.50.100">
    <property type="match status" value="1"/>
</dbReference>
<dbReference type="Gene3D" id="1.10.287.470">
    <property type="entry name" value="Helix hairpin bin"/>
    <property type="match status" value="1"/>
</dbReference>
<dbReference type="HAMAP" id="MF_01422">
    <property type="entry name" value="MdtA"/>
    <property type="match status" value="1"/>
</dbReference>
<dbReference type="InterPro" id="IPR032317">
    <property type="entry name" value="CusB_D23"/>
</dbReference>
<dbReference type="InterPro" id="IPR022824">
    <property type="entry name" value="Multidrug-R_MdtA"/>
</dbReference>
<dbReference type="InterPro" id="IPR006143">
    <property type="entry name" value="RND_pump_MFP"/>
</dbReference>
<dbReference type="NCBIfam" id="NF008589">
    <property type="entry name" value="PRK11556.1"/>
    <property type="match status" value="1"/>
</dbReference>
<dbReference type="NCBIfam" id="TIGR01730">
    <property type="entry name" value="RND_mfp"/>
    <property type="match status" value="1"/>
</dbReference>
<dbReference type="PANTHER" id="PTHR30469">
    <property type="entry name" value="MULTIDRUG RESISTANCE PROTEIN MDTA"/>
    <property type="match status" value="1"/>
</dbReference>
<dbReference type="PANTHER" id="PTHR30469:SF12">
    <property type="entry name" value="MULTIDRUG RESISTANCE PROTEIN MDTA"/>
    <property type="match status" value="1"/>
</dbReference>
<dbReference type="Pfam" id="PF16576">
    <property type="entry name" value="HlyD_D23"/>
    <property type="match status" value="1"/>
</dbReference>
<dbReference type="SUPFAM" id="SSF111369">
    <property type="entry name" value="HlyD-like secretion proteins"/>
    <property type="match status" value="1"/>
</dbReference>
<comment type="subunit">
    <text evidence="1">Part of a tripartite efflux system composed of MdtA, MdtB and MdtC.</text>
</comment>
<comment type="subcellular location">
    <subcellularLocation>
        <location evidence="1">Cell inner membrane</location>
        <topology evidence="1">Peripheral membrane protein</topology>
    </subcellularLocation>
</comment>
<comment type="similarity">
    <text evidence="1">Belongs to the membrane fusion protein (MFP) (TC 8.A.1) family.</text>
</comment>